<protein>
    <recommendedName>
        <fullName evidence="1">Transcription elongation factor GreA</fullName>
    </recommendedName>
    <alternativeName>
        <fullName evidence="1">Transcript cleavage factor GreA</fullName>
    </alternativeName>
</protein>
<reference key="1">
    <citation type="submission" date="2006-08" db="EMBL/GenBank/DDBJ databases">
        <title>Complete sequence of Maricaulis maris MCS10.</title>
        <authorList>
            <consortium name="US DOE Joint Genome Institute"/>
            <person name="Copeland A."/>
            <person name="Lucas S."/>
            <person name="Lapidus A."/>
            <person name="Barry K."/>
            <person name="Detter J.C."/>
            <person name="Glavina del Rio T."/>
            <person name="Hammon N."/>
            <person name="Israni S."/>
            <person name="Dalin E."/>
            <person name="Tice H."/>
            <person name="Pitluck S."/>
            <person name="Saunders E."/>
            <person name="Brettin T."/>
            <person name="Bruce D."/>
            <person name="Han C."/>
            <person name="Tapia R."/>
            <person name="Gilna P."/>
            <person name="Schmutz J."/>
            <person name="Larimer F."/>
            <person name="Land M."/>
            <person name="Hauser L."/>
            <person name="Kyrpides N."/>
            <person name="Mikhailova N."/>
            <person name="Viollier P."/>
            <person name="Stephens C."/>
            <person name="Richardson P."/>
        </authorList>
    </citation>
    <scope>NUCLEOTIDE SEQUENCE [LARGE SCALE GENOMIC DNA]</scope>
    <source>
        <strain>MCS10</strain>
    </source>
</reference>
<sequence length="157" mass="17148">MNKIPMTVAGQIALDEELKRLKTIERPAVIAAISEAREHGDLSENAEYHAAKERQGWIEGRVQELEDKLARAQVIDITKMSGDTVKFGATVTVLDEDTEQESTYQIVGEDESDVKSGKISISSPIARSMINKEVGDVAEVNAPGGLKSYEIMSVSWG</sequence>
<dbReference type="EMBL" id="CP000449">
    <property type="protein sequence ID" value="ABI66431.1"/>
    <property type="molecule type" value="Genomic_DNA"/>
</dbReference>
<dbReference type="RefSeq" id="WP_011644076.1">
    <property type="nucleotide sequence ID" value="NC_008347.1"/>
</dbReference>
<dbReference type="SMR" id="Q0AMQ6"/>
<dbReference type="STRING" id="394221.Mmar10_2139"/>
<dbReference type="KEGG" id="mmr:Mmar10_2139"/>
<dbReference type="eggNOG" id="COG0782">
    <property type="taxonomic scope" value="Bacteria"/>
</dbReference>
<dbReference type="HOGENOM" id="CLU_101379_2_0_5"/>
<dbReference type="OrthoDB" id="9808774at2"/>
<dbReference type="Proteomes" id="UP000001964">
    <property type="component" value="Chromosome"/>
</dbReference>
<dbReference type="GO" id="GO:0003677">
    <property type="term" value="F:DNA binding"/>
    <property type="evidence" value="ECO:0007669"/>
    <property type="project" value="UniProtKB-UniRule"/>
</dbReference>
<dbReference type="GO" id="GO:0070063">
    <property type="term" value="F:RNA polymerase binding"/>
    <property type="evidence" value="ECO:0007669"/>
    <property type="project" value="InterPro"/>
</dbReference>
<dbReference type="GO" id="GO:0006354">
    <property type="term" value="P:DNA-templated transcription elongation"/>
    <property type="evidence" value="ECO:0007669"/>
    <property type="project" value="TreeGrafter"/>
</dbReference>
<dbReference type="GO" id="GO:0032784">
    <property type="term" value="P:regulation of DNA-templated transcription elongation"/>
    <property type="evidence" value="ECO:0007669"/>
    <property type="project" value="UniProtKB-UniRule"/>
</dbReference>
<dbReference type="FunFam" id="1.10.287.180:FF:000001">
    <property type="entry name" value="Transcription elongation factor GreA"/>
    <property type="match status" value="1"/>
</dbReference>
<dbReference type="FunFam" id="3.10.50.30:FF:000001">
    <property type="entry name" value="Transcription elongation factor GreA"/>
    <property type="match status" value="1"/>
</dbReference>
<dbReference type="Gene3D" id="3.10.50.30">
    <property type="entry name" value="Transcription elongation factor, GreA/GreB, C-terminal domain"/>
    <property type="match status" value="1"/>
</dbReference>
<dbReference type="Gene3D" id="1.10.287.180">
    <property type="entry name" value="Transcription elongation factor, GreA/GreB, N-terminal domain"/>
    <property type="match status" value="1"/>
</dbReference>
<dbReference type="HAMAP" id="MF_00105">
    <property type="entry name" value="GreA_GreB"/>
    <property type="match status" value="1"/>
</dbReference>
<dbReference type="InterPro" id="IPR036953">
    <property type="entry name" value="GreA/GreB_C_sf"/>
</dbReference>
<dbReference type="InterPro" id="IPR018151">
    <property type="entry name" value="TF_GreA/GreB_CS"/>
</dbReference>
<dbReference type="InterPro" id="IPR006359">
    <property type="entry name" value="Tscrpt_elong_fac_GreA"/>
</dbReference>
<dbReference type="InterPro" id="IPR028624">
    <property type="entry name" value="Tscrpt_elong_fac_GreA/B"/>
</dbReference>
<dbReference type="InterPro" id="IPR001437">
    <property type="entry name" value="Tscrpt_elong_fac_GreA/B_C"/>
</dbReference>
<dbReference type="InterPro" id="IPR023459">
    <property type="entry name" value="Tscrpt_elong_fac_GreA/B_fam"/>
</dbReference>
<dbReference type="InterPro" id="IPR022691">
    <property type="entry name" value="Tscrpt_elong_fac_GreA/B_N"/>
</dbReference>
<dbReference type="InterPro" id="IPR036805">
    <property type="entry name" value="Tscrpt_elong_fac_GreA/B_N_sf"/>
</dbReference>
<dbReference type="NCBIfam" id="TIGR01462">
    <property type="entry name" value="greA"/>
    <property type="match status" value="1"/>
</dbReference>
<dbReference type="NCBIfam" id="NF001261">
    <property type="entry name" value="PRK00226.1-2"/>
    <property type="match status" value="1"/>
</dbReference>
<dbReference type="NCBIfam" id="NF001263">
    <property type="entry name" value="PRK00226.1-4"/>
    <property type="match status" value="1"/>
</dbReference>
<dbReference type="NCBIfam" id="NF001264">
    <property type="entry name" value="PRK00226.1-5"/>
    <property type="match status" value="1"/>
</dbReference>
<dbReference type="PANTHER" id="PTHR30437">
    <property type="entry name" value="TRANSCRIPTION ELONGATION FACTOR GREA"/>
    <property type="match status" value="1"/>
</dbReference>
<dbReference type="PANTHER" id="PTHR30437:SF4">
    <property type="entry name" value="TRANSCRIPTION ELONGATION FACTOR GREA"/>
    <property type="match status" value="1"/>
</dbReference>
<dbReference type="Pfam" id="PF01272">
    <property type="entry name" value="GreA_GreB"/>
    <property type="match status" value="1"/>
</dbReference>
<dbReference type="Pfam" id="PF03449">
    <property type="entry name" value="GreA_GreB_N"/>
    <property type="match status" value="1"/>
</dbReference>
<dbReference type="PIRSF" id="PIRSF006092">
    <property type="entry name" value="GreA_GreB"/>
    <property type="match status" value="1"/>
</dbReference>
<dbReference type="SUPFAM" id="SSF54534">
    <property type="entry name" value="FKBP-like"/>
    <property type="match status" value="1"/>
</dbReference>
<dbReference type="SUPFAM" id="SSF46557">
    <property type="entry name" value="GreA transcript cleavage protein, N-terminal domain"/>
    <property type="match status" value="1"/>
</dbReference>
<dbReference type="PROSITE" id="PS00829">
    <property type="entry name" value="GREAB_1"/>
    <property type="match status" value="1"/>
</dbReference>
<dbReference type="PROSITE" id="PS00830">
    <property type="entry name" value="GREAB_2"/>
    <property type="match status" value="1"/>
</dbReference>
<evidence type="ECO:0000255" key="1">
    <source>
        <dbReference type="HAMAP-Rule" id="MF_00105"/>
    </source>
</evidence>
<proteinExistence type="inferred from homology"/>
<keyword id="KW-0238">DNA-binding</keyword>
<keyword id="KW-1185">Reference proteome</keyword>
<keyword id="KW-0804">Transcription</keyword>
<keyword id="KW-0805">Transcription regulation</keyword>
<comment type="function">
    <text evidence="1">Necessary for efficient RNA polymerase transcription elongation past template-encoded arresting sites. The arresting sites in DNA have the property of trapping a certain fraction of elongating RNA polymerases that pass through, resulting in locked ternary complexes. Cleavage of the nascent transcript by cleavage factors such as GreA or GreB allows the resumption of elongation from the new 3'terminus. GreA releases sequences of 2 to 3 nucleotides.</text>
</comment>
<comment type="similarity">
    <text evidence="1">Belongs to the GreA/GreB family.</text>
</comment>
<organism>
    <name type="scientific">Maricaulis maris (strain MCS10)</name>
    <name type="common">Caulobacter maris</name>
    <dbReference type="NCBI Taxonomy" id="394221"/>
    <lineage>
        <taxon>Bacteria</taxon>
        <taxon>Pseudomonadati</taxon>
        <taxon>Pseudomonadota</taxon>
        <taxon>Alphaproteobacteria</taxon>
        <taxon>Maricaulales</taxon>
        <taxon>Maricaulaceae</taxon>
        <taxon>Maricaulis</taxon>
    </lineage>
</organism>
<accession>Q0AMQ6</accession>
<name>GREA_MARMM</name>
<feature type="chain" id="PRO_1000075875" description="Transcription elongation factor GreA">
    <location>
        <begin position="1"/>
        <end position="157"/>
    </location>
</feature>
<gene>
    <name evidence="1" type="primary">greA</name>
    <name type="ordered locus">Mmar10_2139</name>
</gene>